<proteinExistence type="predicted"/>
<keyword id="KW-1003">Cell membrane</keyword>
<keyword id="KW-0472">Membrane</keyword>
<keyword id="KW-1185">Reference proteome</keyword>
<keyword id="KW-0812">Transmembrane</keyword>
<keyword id="KW-1133">Transmembrane helix</keyword>
<sequence length="108" mass="12557">MKYIIFLFRAIWLALSLLILFFSMHRLSLLDSTRDVSELISLMSYGMMVICFPTGIVFFIALIFIGTVSDIIGVRIDSKYIMAIIIWLYFLSGGYIQWFVLSKRIINK</sequence>
<evidence type="ECO:0000255" key="1"/>
<evidence type="ECO:0000305" key="2"/>
<reference key="1">
    <citation type="journal article" date="1993" name="J. Bacteriol.">
        <title>Rhs elements of Escherichia coli K-12: complex composites of shared and unique components that have different evolutionary histories.</title>
        <authorList>
            <person name="Zhao S."/>
            <person name="Sandt C.H."/>
            <person name="Feulner G."/>
            <person name="Vlazny D.A."/>
            <person name="Gray J.A."/>
            <person name="Hill C.W."/>
        </authorList>
    </citation>
    <scope>NUCLEOTIDE SEQUENCE [GENOMIC DNA]</scope>
    <source>
        <strain>K12</strain>
    </source>
</reference>
<reference key="2">
    <citation type="journal article" date="1996" name="DNA Res.">
        <title>A 718-kb DNA sequence of the Escherichia coli K-12 genome corresponding to the 12.7-28.0 min region on the linkage map.</title>
        <authorList>
            <person name="Oshima T."/>
            <person name="Aiba H."/>
            <person name="Baba T."/>
            <person name="Fujita K."/>
            <person name="Hayashi K."/>
            <person name="Honjo A."/>
            <person name="Ikemoto K."/>
            <person name="Inada T."/>
            <person name="Itoh T."/>
            <person name="Kajihara M."/>
            <person name="Kanai K."/>
            <person name="Kashimoto K."/>
            <person name="Kimura S."/>
            <person name="Kitagawa M."/>
            <person name="Makino K."/>
            <person name="Masuda S."/>
            <person name="Miki T."/>
            <person name="Mizobuchi K."/>
            <person name="Mori H."/>
            <person name="Motomura K."/>
            <person name="Nakamura Y."/>
            <person name="Nashimoto H."/>
            <person name="Nishio Y."/>
            <person name="Saito N."/>
            <person name="Sampei G."/>
            <person name="Seki Y."/>
            <person name="Tagami H."/>
            <person name="Takemoto K."/>
            <person name="Wada C."/>
            <person name="Yamamoto Y."/>
            <person name="Yano M."/>
            <person name="Horiuchi T."/>
        </authorList>
    </citation>
    <scope>NUCLEOTIDE SEQUENCE [LARGE SCALE GENOMIC DNA]</scope>
    <source>
        <strain>K12 / W3110 / ATCC 27325 / DSM 5911</strain>
    </source>
</reference>
<reference key="3">
    <citation type="journal article" date="1997" name="Science">
        <title>The complete genome sequence of Escherichia coli K-12.</title>
        <authorList>
            <person name="Blattner F.R."/>
            <person name="Plunkett G. III"/>
            <person name="Bloch C.A."/>
            <person name="Perna N.T."/>
            <person name="Burland V."/>
            <person name="Riley M."/>
            <person name="Collado-Vides J."/>
            <person name="Glasner J.D."/>
            <person name="Rode C.K."/>
            <person name="Mayhew G.F."/>
            <person name="Gregor J."/>
            <person name="Davis N.W."/>
            <person name="Kirkpatrick H.A."/>
            <person name="Goeden M.A."/>
            <person name="Rose D.J."/>
            <person name="Mau B."/>
            <person name="Shao Y."/>
        </authorList>
    </citation>
    <scope>NUCLEOTIDE SEQUENCE [LARGE SCALE GENOMIC DNA]</scope>
    <source>
        <strain>K12 / MG1655 / ATCC 47076</strain>
    </source>
</reference>
<reference key="4">
    <citation type="journal article" date="2006" name="Mol. Syst. Biol.">
        <title>Highly accurate genome sequences of Escherichia coli K-12 strains MG1655 and W3110.</title>
        <authorList>
            <person name="Hayashi K."/>
            <person name="Morooka N."/>
            <person name="Yamamoto Y."/>
            <person name="Fujita K."/>
            <person name="Isono K."/>
            <person name="Choi S."/>
            <person name="Ohtsubo E."/>
            <person name="Baba T."/>
            <person name="Wanner B.L."/>
            <person name="Mori H."/>
            <person name="Horiuchi T."/>
        </authorList>
    </citation>
    <scope>NUCLEOTIDE SEQUENCE [LARGE SCALE GENOMIC DNA]</scope>
    <source>
        <strain>K12 / W3110 / ATCC 27325 / DSM 5911</strain>
    </source>
</reference>
<comment type="subcellular location">
    <subcellularLocation>
        <location evidence="2">Cell membrane</location>
        <topology evidence="2">Multi-pass membrane protein</topology>
    </subcellularLocation>
</comment>
<feature type="chain" id="PRO_0000168685" description="Uncharacterized protein YbfB">
    <location>
        <begin position="1"/>
        <end position="108"/>
    </location>
</feature>
<feature type="transmembrane region" description="Helical" evidence="1">
    <location>
        <begin position="4"/>
        <end position="24"/>
    </location>
</feature>
<feature type="transmembrane region" description="Helical" evidence="1">
    <location>
        <begin position="46"/>
        <end position="66"/>
    </location>
</feature>
<feature type="transmembrane region" description="Helical" evidence="1">
    <location>
        <begin position="81"/>
        <end position="101"/>
    </location>
</feature>
<name>YBFB_ECOLI</name>
<gene>
    <name type="primary">ybfB</name>
    <name type="ordered locus">b0702</name>
    <name type="ordered locus">JW0691</name>
</gene>
<dbReference type="EMBL" id="L02373">
    <property type="protein sequence ID" value="AAC63073.1"/>
    <property type="molecule type" value="Genomic_DNA"/>
</dbReference>
<dbReference type="EMBL" id="U00096">
    <property type="protein sequence ID" value="AAC73796.1"/>
    <property type="molecule type" value="Genomic_DNA"/>
</dbReference>
<dbReference type="EMBL" id="AP009048">
    <property type="protein sequence ID" value="BAA35360.1"/>
    <property type="molecule type" value="Genomic_DNA"/>
</dbReference>
<dbReference type="PIR" id="E64805">
    <property type="entry name" value="E64805"/>
</dbReference>
<dbReference type="RefSeq" id="NP_415230.1">
    <property type="nucleotide sequence ID" value="NC_000913.3"/>
</dbReference>
<dbReference type="RefSeq" id="WP_000873944.1">
    <property type="nucleotide sequence ID" value="NZ_SSZK01000125.1"/>
</dbReference>
<dbReference type="SMR" id="P0AAU5"/>
<dbReference type="BioGRID" id="4259411">
    <property type="interactions" value="135"/>
</dbReference>
<dbReference type="FunCoup" id="P0AAU5">
    <property type="interactions" value="4"/>
</dbReference>
<dbReference type="STRING" id="511145.b0702"/>
<dbReference type="PaxDb" id="511145-b0702"/>
<dbReference type="EnsemblBacteria" id="AAC73796">
    <property type="protein sequence ID" value="AAC73796"/>
    <property type="gene ID" value="b0702"/>
</dbReference>
<dbReference type="GeneID" id="75202252"/>
<dbReference type="GeneID" id="947566"/>
<dbReference type="KEGG" id="ecj:JW0691"/>
<dbReference type="KEGG" id="eco:b0702"/>
<dbReference type="KEGG" id="ecoc:C3026_03505"/>
<dbReference type="PATRIC" id="fig|1411691.4.peg.1573"/>
<dbReference type="EchoBASE" id="EB1484"/>
<dbReference type="eggNOG" id="ENOG502ZGRQ">
    <property type="taxonomic scope" value="Bacteria"/>
</dbReference>
<dbReference type="HOGENOM" id="CLU_2193015_0_0_6"/>
<dbReference type="InParanoid" id="P0AAU5"/>
<dbReference type="OMA" id="EDIMYDV"/>
<dbReference type="OrthoDB" id="9900356at2"/>
<dbReference type="BioCyc" id="EcoCyc:EG11522-MONOMER"/>
<dbReference type="PRO" id="PR:P0AAU5"/>
<dbReference type="Proteomes" id="UP000000625">
    <property type="component" value="Chromosome"/>
</dbReference>
<dbReference type="GO" id="GO:0005886">
    <property type="term" value="C:plasma membrane"/>
    <property type="evidence" value="ECO:0000314"/>
    <property type="project" value="EcoCyc"/>
</dbReference>
<accession>P0AAU5</accession>
<accession>P28914</accession>
<organism>
    <name type="scientific">Escherichia coli (strain K12)</name>
    <dbReference type="NCBI Taxonomy" id="83333"/>
    <lineage>
        <taxon>Bacteria</taxon>
        <taxon>Pseudomonadati</taxon>
        <taxon>Pseudomonadota</taxon>
        <taxon>Gammaproteobacteria</taxon>
        <taxon>Enterobacterales</taxon>
        <taxon>Enterobacteriaceae</taxon>
        <taxon>Escherichia</taxon>
    </lineage>
</organism>
<protein>
    <recommendedName>
        <fullName>Uncharacterized protein YbfB</fullName>
    </recommendedName>
</protein>